<evidence type="ECO:0000255" key="1">
    <source>
        <dbReference type="HAMAP-Rule" id="MF_01358"/>
    </source>
</evidence>
<proteinExistence type="inferred from homology"/>
<dbReference type="EC" id="7.1.1.-" evidence="1"/>
<dbReference type="EMBL" id="CP000699">
    <property type="protein sequence ID" value="ABQ69336.1"/>
    <property type="molecule type" value="Genomic_DNA"/>
</dbReference>
<dbReference type="SMR" id="A5VAM0"/>
<dbReference type="STRING" id="392499.Swit_2985"/>
<dbReference type="PaxDb" id="392499-Swit_2985"/>
<dbReference type="KEGG" id="swi:Swit_2985"/>
<dbReference type="eggNOG" id="COG0649">
    <property type="taxonomic scope" value="Bacteria"/>
</dbReference>
<dbReference type="HOGENOM" id="CLU_015134_1_1_5"/>
<dbReference type="OrthoDB" id="9801496at2"/>
<dbReference type="Proteomes" id="UP000001989">
    <property type="component" value="Chromosome"/>
</dbReference>
<dbReference type="GO" id="GO:0005886">
    <property type="term" value="C:plasma membrane"/>
    <property type="evidence" value="ECO:0007669"/>
    <property type="project" value="UniProtKB-SubCell"/>
</dbReference>
<dbReference type="GO" id="GO:0051287">
    <property type="term" value="F:NAD binding"/>
    <property type="evidence" value="ECO:0007669"/>
    <property type="project" value="InterPro"/>
</dbReference>
<dbReference type="GO" id="GO:0050136">
    <property type="term" value="F:NADH:ubiquinone reductase (non-electrogenic) activity"/>
    <property type="evidence" value="ECO:0007669"/>
    <property type="project" value="UniProtKB-UniRule"/>
</dbReference>
<dbReference type="GO" id="GO:0048038">
    <property type="term" value="F:quinone binding"/>
    <property type="evidence" value="ECO:0007669"/>
    <property type="project" value="UniProtKB-KW"/>
</dbReference>
<dbReference type="FunFam" id="1.10.645.10:FF:000005">
    <property type="entry name" value="NADH-quinone oxidoreductase subunit D"/>
    <property type="match status" value="1"/>
</dbReference>
<dbReference type="Gene3D" id="1.10.645.10">
    <property type="entry name" value="Cytochrome-c3 Hydrogenase, chain B"/>
    <property type="match status" value="1"/>
</dbReference>
<dbReference type="HAMAP" id="MF_01358">
    <property type="entry name" value="NDH1_NuoD"/>
    <property type="match status" value="1"/>
</dbReference>
<dbReference type="InterPro" id="IPR001135">
    <property type="entry name" value="NADH_Q_OxRdtase_suD"/>
</dbReference>
<dbReference type="InterPro" id="IPR014029">
    <property type="entry name" value="NADH_UbQ_OxRdtase_49kDa_CS"/>
</dbReference>
<dbReference type="InterPro" id="IPR022885">
    <property type="entry name" value="NDH1_su_D/H"/>
</dbReference>
<dbReference type="InterPro" id="IPR029014">
    <property type="entry name" value="NiFe-Hase_large"/>
</dbReference>
<dbReference type="NCBIfam" id="TIGR01962">
    <property type="entry name" value="NuoD"/>
    <property type="match status" value="1"/>
</dbReference>
<dbReference type="NCBIfam" id="NF004739">
    <property type="entry name" value="PRK06075.1"/>
    <property type="match status" value="1"/>
</dbReference>
<dbReference type="PANTHER" id="PTHR11993:SF10">
    <property type="entry name" value="NADH DEHYDROGENASE [UBIQUINONE] IRON-SULFUR PROTEIN 2, MITOCHONDRIAL"/>
    <property type="match status" value="1"/>
</dbReference>
<dbReference type="PANTHER" id="PTHR11993">
    <property type="entry name" value="NADH-UBIQUINONE OXIDOREDUCTASE 49 KDA SUBUNIT"/>
    <property type="match status" value="1"/>
</dbReference>
<dbReference type="Pfam" id="PF00346">
    <property type="entry name" value="Complex1_49kDa"/>
    <property type="match status" value="1"/>
</dbReference>
<dbReference type="SUPFAM" id="SSF56762">
    <property type="entry name" value="HydB/Nqo4-like"/>
    <property type="match status" value="1"/>
</dbReference>
<dbReference type="PROSITE" id="PS00535">
    <property type="entry name" value="COMPLEX1_49K"/>
    <property type="match status" value="1"/>
</dbReference>
<comment type="function">
    <text evidence="1">NDH-1 shuttles electrons from NADH, via FMN and iron-sulfur (Fe-S) centers, to quinones in the respiratory chain. The immediate electron acceptor for the enzyme in this species is believed to be ubiquinone. Couples the redox reaction to proton translocation (for every two electrons transferred, four hydrogen ions are translocated across the cytoplasmic membrane), and thus conserves the redox energy in a proton gradient.</text>
</comment>
<comment type="catalytic activity">
    <reaction evidence="1">
        <text>a quinone + NADH + 5 H(+)(in) = a quinol + NAD(+) + 4 H(+)(out)</text>
        <dbReference type="Rhea" id="RHEA:57888"/>
        <dbReference type="ChEBI" id="CHEBI:15378"/>
        <dbReference type="ChEBI" id="CHEBI:24646"/>
        <dbReference type="ChEBI" id="CHEBI:57540"/>
        <dbReference type="ChEBI" id="CHEBI:57945"/>
        <dbReference type="ChEBI" id="CHEBI:132124"/>
    </reaction>
</comment>
<comment type="subunit">
    <text evidence="1">NDH-1 is composed of 14 different subunits. Subunits NuoB, C, D, E, F, and G constitute the peripheral sector of the complex.</text>
</comment>
<comment type="subcellular location">
    <subcellularLocation>
        <location evidence="1">Cell inner membrane</location>
        <topology evidence="1">Peripheral membrane protein</topology>
        <orientation evidence="1">Cytoplasmic side</orientation>
    </subcellularLocation>
</comment>
<comment type="similarity">
    <text evidence="1">Belongs to the complex I 49 kDa subunit family.</text>
</comment>
<name>NUOD_RHIWR</name>
<reference key="1">
    <citation type="journal article" date="2010" name="J. Bacteriol.">
        <title>Genome sequence of the dioxin-mineralizing bacterium Sphingomonas wittichii RW1.</title>
        <authorList>
            <person name="Miller T.R."/>
            <person name="Delcher A.L."/>
            <person name="Salzberg S.L."/>
            <person name="Saunders E."/>
            <person name="Detter J.C."/>
            <person name="Halden R.U."/>
        </authorList>
    </citation>
    <scope>NUCLEOTIDE SEQUENCE [LARGE SCALE GENOMIC DNA]</scope>
    <source>
        <strain>DSM 6014 / CCUG 31198 / JCM 15750 / NBRC 105917 / EY 4224 / RW1</strain>
    </source>
</reference>
<feature type="chain" id="PRO_0000357934" description="NADH-quinone oxidoreductase subunit D">
    <location>
        <begin position="1"/>
        <end position="406"/>
    </location>
</feature>
<protein>
    <recommendedName>
        <fullName evidence="1">NADH-quinone oxidoreductase subunit D</fullName>
        <ecNumber evidence="1">7.1.1.-</ecNumber>
    </recommendedName>
    <alternativeName>
        <fullName evidence="1">NADH dehydrogenase I subunit D</fullName>
    </alternativeName>
    <alternativeName>
        <fullName evidence="1">NDH-1 subunit D</fullName>
    </alternativeName>
</protein>
<gene>
    <name evidence="1" type="primary">nuoD</name>
    <name type="ordered locus">Swit_2985</name>
</gene>
<keyword id="KW-0997">Cell inner membrane</keyword>
<keyword id="KW-1003">Cell membrane</keyword>
<keyword id="KW-0472">Membrane</keyword>
<keyword id="KW-0520">NAD</keyword>
<keyword id="KW-0874">Quinone</keyword>
<keyword id="KW-1185">Reference proteome</keyword>
<keyword id="KW-1278">Translocase</keyword>
<keyword id="KW-0813">Transport</keyword>
<keyword id="KW-0830">Ubiquinone</keyword>
<sequence length="406" mass="46189">MASTYDTLTPEAQKGEVEIQNYTINFGPQHPAAHGVLRMVMELDGEIVERVDPHVGLLHRGTEKLIEYKTYLQALPYFDRLDYCSPLGMEHSYVLAIEKLLQLEVPLRAQYLRVLFAELTRICNHMLNIGSHVMDVGAMTPNLWLFEIREDCLNFFERASGARMHAAWFRPGGVHQDVPLKLLTDIGDWLDTRLPRLFEDAVSLFADNRIFKQRNVDVGVVSKEDALAWGFSGPMIRAAGIPWDIRKSQPYDVYDRMDFEIPVGTKGDCYDRVMVRIEEVRQSARIMKQCLSEMPEGPIASLDRKVVPPKRGEMKRSMEALIHHFKLYTEGFHVPAGDVYVATESPKGEFGVYLVSDGSNKPYRCKIRPTAFSHLQAMDFMMKGHMLADTTAILSAIDVVFGECDR</sequence>
<organism>
    <name type="scientific">Rhizorhabdus wittichii (strain DSM 6014 / CCUG 31198 / JCM 15750 / NBRC 105917 / EY 4224 / RW1)</name>
    <name type="common">Sphingomonas wittichii</name>
    <dbReference type="NCBI Taxonomy" id="392499"/>
    <lineage>
        <taxon>Bacteria</taxon>
        <taxon>Pseudomonadati</taxon>
        <taxon>Pseudomonadota</taxon>
        <taxon>Alphaproteobacteria</taxon>
        <taxon>Sphingomonadales</taxon>
        <taxon>Sphingomonadaceae</taxon>
        <taxon>Rhizorhabdus</taxon>
    </lineage>
</organism>
<accession>A5VAM0</accession>